<evidence type="ECO:0000250" key="1"/>
<evidence type="ECO:0000255" key="2"/>
<evidence type="ECO:0000305" key="3"/>
<organism>
    <name type="scientific">Arabidopsis thaliana</name>
    <name type="common">Mouse-ear cress</name>
    <dbReference type="NCBI Taxonomy" id="3702"/>
    <lineage>
        <taxon>Eukaryota</taxon>
        <taxon>Viridiplantae</taxon>
        <taxon>Streptophyta</taxon>
        <taxon>Embryophyta</taxon>
        <taxon>Tracheophyta</taxon>
        <taxon>Spermatophyta</taxon>
        <taxon>Magnoliopsida</taxon>
        <taxon>eudicotyledons</taxon>
        <taxon>Gunneridae</taxon>
        <taxon>Pentapetalae</taxon>
        <taxon>rosids</taxon>
        <taxon>malvids</taxon>
        <taxon>Brassicales</taxon>
        <taxon>Brassicaceae</taxon>
        <taxon>Camelineae</taxon>
        <taxon>Arabidopsis</taxon>
    </lineage>
</organism>
<keyword id="KW-0929">Antimicrobial</keyword>
<keyword id="KW-1015">Disulfide bond</keyword>
<keyword id="KW-0295">Fungicide</keyword>
<keyword id="KW-0611">Plant defense</keyword>
<keyword id="KW-1185">Reference proteome</keyword>
<keyword id="KW-0964">Secreted</keyword>
<keyword id="KW-0732">Signal</keyword>
<proteinExistence type="inferred from homology"/>
<dbReference type="EMBL" id="Z97344">
    <property type="status" value="NOT_ANNOTATED_CDS"/>
    <property type="molecule type" value="Genomic_DNA"/>
</dbReference>
<dbReference type="EMBL" id="AL161547">
    <property type="status" value="NOT_ANNOTATED_CDS"/>
    <property type="molecule type" value="Genomic_DNA"/>
</dbReference>
<dbReference type="EMBL" id="CP002687">
    <property type="protein sequence ID" value="AEE83939.1"/>
    <property type="molecule type" value="Genomic_DNA"/>
</dbReference>
<dbReference type="RefSeq" id="NP_001031656.1">
    <property type="nucleotide sequence ID" value="NM_001036579.1"/>
</dbReference>
<dbReference type="SMR" id="Q2V3H5"/>
<dbReference type="iPTMnet" id="Q2V3H5"/>
<dbReference type="PaxDb" id="3702-AT4G17718.1"/>
<dbReference type="EnsemblPlants" id="AT4G17718.1">
    <property type="protein sequence ID" value="AT4G17718.1"/>
    <property type="gene ID" value="AT4G17718"/>
</dbReference>
<dbReference type="GeneID" id="3770190"/>
<dbReference type="Gramene" id="AT4G17718.1">
    <property type="protein sequence ID" value="AT4G17718.1"/>
    <property type="gene ID" value="AT4G17718"/>
</dbReference>
<dbReference type="KEGG" id="ath:AT4G17718"/>
<dbReference type="Araport" id="AT4G17718"/>
<dbReference type="TAIR" id="AT4G17718"/>
<dbReference type="HOGENOM" id="CLU_184730_0_0_1"/>
<dbReference type="InParanoid" id="Q2V3H5"/>
<dbReference type="OMA" id="GCECPRE"/>
<dbReference type="PhylomeDB" id="Q2V3H5"/>
<dbReference type="PRO" id="PR:Q2V3H5"/>
<dbReference type="Proteomes" id="UP000006548">
    <property type="component" value="Chromosome 4"/>
</dbReference>
<dbReference type="ExpressionAtlas" id="Q2V3H5">
    <property type="expression patterns" value="baseline"/>
</dbReference>
<dbReference type="GO" id="GO:0005576">
    <property type="term" value="C:extracellular region"/>
    <property type="evidence" value="ECO:0007669"/>
    <property type="project" value="UniProtKB-SubCell"/>
</dbReference>
<dbReference type="GO" id="GO:0046872">
    <property type="term" value="F:metal ion binding"/>
    <property type="evidence" value="ECO:0007669"/>
    <property type="project" value="InterPro"/>
</dbReference>
<dbReference type="GO" id="GO:0050832">
    <property type="term" value="P:defense response to fungus"/>
    <property type="evidence" value="ECO:0007669"/>
    <property type="project" value="UniProtKB-KW"/>
</dbReference>
<dbReference type="GO" id="GO:0031640">
    <property type="term" value="P:killing of cells of another organism"/>
    <property type="evidence" value="ECO:0007669"/>
    <property type="project" value="UniProtKB-KW"/>
</dbReference>
<dbReference type="InterPro" id="IPR009810">
    <property type="entry name" value="Nodulin_late_dom"/>
</dbReference>
<dbReference type="Pfam" id="PF07127">
    <property type="entry name" value="Nodulin_late"/>
    <property type="match status" value="1"/>
</dbReference>
<reference key="1">
    <citation type="journal article" date="1998" name="Nature">
        <title>Analysis of 1.9 Mb of contiguous sequence from chromosome 4 of Arabidopsis thaliana.</title>
        <authorList>
            <person name="Bevan M."/>
            <person name="Bancroft I."/>
            <person name="Bent E."/>
            <person name="Love K."/>
            <person name="Goodman H.M."/>
            <person name="Dean C."/>
            <person name="Bergkamp R."/>
            <person name="Dirkse W."/>
            <person name="van Staveren M."/>
            <person name="Stiekema W."/>
            <person name="Drost L."/>
            <person name="Ridley P."/>
            <person name="Hudson S.-A."/>
            <person name="Patel K."/>
            <person name="Murphy G."/>
            <person name="Piffanelli P."/>
            <person name="Wedler H."/>
            <person name="Wedler E."/>
            <person name="Wambutt R."/>
            <person name="Weitzenegger T."/>
            <person name="Pohl T."/>
            <person name="Terryn N."/>
            <person name="Gielen J."/>
            <person name="Villarroel R."/>
            <person name="De Clercq R."/>
            <person name="van Montagu M."/>
            <person name="Lecharny A."/>
            <person name="Aubourg S."/>
            <person name="Gy I."/>
            <person name="Kreis M."/>
            <person name="Lao N."/>
            <person name="Kavanagh T."/>
            <person name="Hempel S."/>
            <person name="Kotter P."/>
            <person name="Entian K.-D."/>
            <person name="Rieger M."/>
            <person name="Schaefer M."/>
            <person name="Funk B."/>
            <person name="Mueller-Auer S."/>
            <person name="Silvey M."/>
            <person name="James R."/>
            <person name="Monfort A."/>
            <person name="Pons A."/>
            <person name="Puigdomenech P."/>
            <person name="Douka A."/>
            <person name="Voukelatou E."/>
            <person name="Milioni D."/>
            <person name="Hatzopoulos P."/>
            <person name="Piravandi E."/>
            <person name="Obermaier B."/>
            <person name="Hilbert H."/>
            <person name="Duesterhoeft A."/>
            <person name="Moores T."/>
            <person name="Jones J.D.G."/>
            <person name="Eneva T."/>
            <person name="Palme K."/>
            <person name="Benes V."/>
            <person name="Rechmann S."/>
            <person name="Ansorge W."/>
            <person name="Cooke R."/>
            <person name="Berger C."/>
            <person name="Delseny M."/>
            <person name="Voet M."/>
            <person name="Volckaert G."/>
            <person name="Mewes H.-W."/>
            <person name="Klosterman S."/>
            <person name="Schueller C."/>
            <person name="Chalwatzis N."/>
        </authorList>
    </citation>
    <scope>NUCLEOTIDE SEQUENCE [LARGE SCALE GENOMIC DNA]</scope>
    <source>
        <strain>cv. Columbia</strain>
    </source>
</reference>
<reference key="2">
    <citation type="journal article" date="1999" name="Nature">
        <title>Sequence and analysis of chromosome 4 of the plant Arabidopsis thaliana.</title>
        <authorList>
            <person name="Mayer K.F.X."/>
            <person name="Schueller C."/>
            <person name="Wambutt R."/>
            <person name="Murphy G."/>
            <person name="Volckaert G."/>
            <person name="Pohl T."/>
            <person name="Duesterhoeft A."/>
            <person name="Stiekema W."/>
            <person name="Entian K.-D."/>
            <person name="Terryn N."/>
            <person name="Harris B."/>
            <person name="Ansorge W."/>
            <person name="Brandt P."/>
            <person name="Grivell L.A."/>
            <person name="Rieger M."/>
            <person name="Weichselgartner M."/>
            <person name="de Simone V."/>
            <person name="Obermaier B."/>
            <person name="Mache R."/>
            <person name="Mueller M."/>
            <person name="Kreis M."/>
            <person name="Delseny M."/>
            <person name="Puigdomenech P."/>
            <person name="Watson M."/>
            <person name="Schmidtheini T."/>
            <person name="Reichert B."/>
            <person name="Portetelle D."/>
            <person name="Perez-Alonso M."/>
            <person name="Boutry M."/>
            <person name="Bancroft I."/>
            <person name="Vos P."/>
            <person name="Hoheisel J."/>
            <person name="Zimmermann W."/>
            <person name="Wedler H."/>
            <person name="Ridley P."/>
            <person name="Langham S.-A."/>
            <person name="McCullagh B."/>
            <person name="Bilham L."/>
            <person name="Robben J."/>
            <person name="van der Schueren J."/>
            <person name="Grymonprez B."/>
            <person name="Chuang Y.-J."/>
            <person name="Vandenbussche F."/>
            <person name="Braeken M."/>
            <person name="Weltjens I."/>
            <person name="Voet M."/>
            <person name="Bastiaens I."/>
            <person name="Aert R."/>
            <person name="Defoor E."/>
            <person name="Weitzenegger T."/>
            <person name="Bothe G."/>
            <person name="Ramsperger U."/>
            <person name="Hilbert H."/>
            <person name="Braun M."/>
            <person name="Holzer E."/>
            <person name="Brandt A."/>
            <person name="Peters S."/>
            <person name="van Staveren M."/>
            <person name="Dirkse W."/>
            <person name="Mooijman P."/>
            <person name="Klein Lankhorst R."/>
            <person name="Rose M."/>
            <person name="Hauf J."/>
            <person name="Koetter P."/>
            <person name="Berneiser S."/>
            <person name="Hempel S."/>
            <person name="Feldpausch M."/>
            <person name="Lamberth S."/>
            <person name="Van den Daele H."/>
            <person name="De Keyser A."/>
            <person name="Buysshaert C."/>
            <person name="Gielen J."/>
            <person name="Villarroel R."/>
            <person name="De Clercq R."/>
            <person name="van Montagu M."/>
            <person name="Rogers J."/>
            <person name="Cronin A."/>
            <person name="Quail M.A."/>
            <person name="Bray-Allen S."/>
            <person name="Clark L."/>
            <person name="Doggett J."/>
            <person name="Hall S."/>
            <person name="Kay M."/>
            <person name="Lennard N."/>
            <person name="McLay K."/>
            <person name="Mayes R."/>
            <person name="Pettett A."/>
            <person name="Rajandream M.A."/>
            <person name="Lyne M."/>
            <person name="Benes V."/>
            <person name="Rechmann S."/>
            <person name="Borkova D."/>
            <person name="Bloecker H."/>
            <person name="Scharfe M."/>
            <person name="Grimm M."/>
            <person name="Loehnert T.-H."/>
            <person name="Dose S."/>
            <person name="de Haan M."/>
            <person name="Maarse A.C."/>
            <person name="Schaefer M."/>
            <person name="Mueller-Auer S."/>
            <person name="Gabel C."/>
            <person name="Fuchs M."/>
            <person name="Fartmann B."/>
            <person name="Granderath K."/>
            <person name="Dauner D."/>
            <person name="Herzl A."/>
            <person name="Neumann S."/>
            <person name="Argiriou A."/>
            <person name="Vitale D."/>
            <person name="Liguori R."/>
            <person name="Piravandi E."/>
            <person name="Massenet O."/>
            <person name="Quigley F."/>
            <person name="Clabauld G."/>
            <person name="Muendlein A."/>
            <person name="Felber R."/>
            <person name="Schnabl S."/>
            <person name="Hiller R."/>
            <person name="Schmidt W."/>
            <person name="Lecharny A."/>
            <person name="Aubourg S."/>
            <person name="Chefdor F."/>
            <person name="Cooke R."/>
            <person name="Berger C."/>
            <person name="Monfort A."/>
            <person name="Casacuberta E."/>
            <person name="Gibbons T."/>
            <person name="Weber N."/>
            <person name="Vandenbol M."/>
            <person name="Bargues M."/>
            <person name="Terol J."/>
            <person name="Torres A."/>
            <person name="Perez-Perez A."/>
            <person name="Purnelle B."/>
            <person name="Bent E."/>
            <person name="Johnson S."/>
            <person name="Tacon D."/>
            <person name="Jesse T."/>
            <person name="Heijnen L."/>
            <person name="Schwarz S."/>
            <person name="Scholler P."/>
            <person name="Heber S."/>
            <person name="Francs P."/>
            <person name="Bielke C."/>
            <person name="Frishman D."/>
            <person name="Haase D."/>
            <person name="Lemcke K."/>
            <person name="Mewes H.-W."/>
            <person name="Stocker S."/>
            <person name="Zaccaria P."/>
            <person name="Bevan M."/>
            <person name="Wilson R.K."/>
            <person name="de la Bastide M."/>
            <person name="Habermann K."/>
            <person name="Parnell L."/>
            <person name="Dedhia N."/>
            <person name="Gnoj L."/>
            <person name="Schutz K."/>
            <person name="Huang E."/>
            <person name="Spiegel L."/>
            <person name="Sekhon M."/>
            <person name="Murray J."/>
            <person name="Sheet P."/>
            <person name="Cordes M."/>
            <person name="Abu-Threideh J."/>
            <person name="Stoneking T."/>
            <person name="Kalicki J."/>
            <person name="Graves T."/>
            <person name="Harmon G."/>
            <person name="Edwards J."/>
            <person name="Latreille P."/>
            <person name="Courtney L."/>
            <person name="Cloud J."/>
            <person name="Abbott A."/>
            <person name="Scott K."/>
            <person name="Johnson D."/>
            <person name="Minx P."/>
            <person name="Bentley D."/>
            <person name="Fulton B."/>
            <person name="Miller N."/>
            <person name="Greco T."/>
            <person name="Kemp K."/>
            <person name="Kramer J."/>
            <person name="Fulton L."/>
            <person name="Mardis E."/>
            <person name="Dante M."/>
            <person name="Pepin K."/>
            <person name="Hillier L.W."/>
            <person name="Nelson J."/>
            <person name="Spieth J."/>
            <person name="Ryan E."/>
            <person name="Andrews S."/>
            <person name="Geisel C."/>
            <person name="Layman D."/>
            <person name="Du H."/>
            <person name="Ali J."/>
            <person name="Berghoff A."/>
            <person name="Jones K."/>
            <person name="Drone K."/>
            <person name="Cotton M."/>
            <person name="Joshu C."/>
            <person name="Antonoiu B."/>
            <person name="Zidanic M."/>
            <person name="Strong C."/>
            <person name="Sun H."/>
            <person name="Lamar B."/>
            <person name="Yordan C."/>
            <person name="Ma P."/>
            <person name="Zhong J."/>
            <person name="Preston R."/>
            <person name="Vil D."/>
            <person name="Shekher M."/>
            <person name="Matero A."/>
            <person name="Shah R."/>
            <person name="Swaby I.K."/>
            <person name="O'Shaughnessy A."/>
            <person name="Rodriguez M."/>
            <person name="Hoffman J."/>
            <person name="Till S."/>
            <person name="Granat S."/>
            <person name="Shohdy N."/>
            <person name="Hasegawa A."/>
            <person name="Hameed A."/>
            <person name="Lodhi M."/>
            <person name="Johnson A."/>
            <person name="Chen E."/>
            <person name="Marra M.A."/>
            <person name="Martienssen R."/>
            <person name="McCombie W.R."/>
        </authorList>
    </citation>
    <scope>NUCLEOTIDE SEQUENCE [LARGE SCALE GENOMIC DNA]</scope>
    <source>
        <strain>cv. Columbia</strain>
    </source>
</reference>
<reference key="3">
    <citation type="journal article" date="2017" name="Plant J.">
        <title>Araport11: a complete reannotation of the Arabidopsis thaliana reference genome.</title>
        <authorList>
            <person name="Cheng C.Y."/>
            <person name="Krishnakumar V."/>
            <person name="Chan A.P."/>
            <person name="Thibaud-Nissen F."/>
            <person name="Schobel S."/>
            <person name="Town C.D."/>
        </authorList>
    </citation>
    <scope>GENOME REANNOTATION</scope>
    <source>
        <strain>cv. Columbia</strain>
    </source>
</reference>
<reference key="4">
    <citation type="journal article" date="2005" name="Plant Physiol.">
        <title>Genome organization of more than 300 defensin-like genes in Arabidopsis.</title>
        <authorList>
            <person name="Silverstein K.A.T."/>
            <person name="Graham M.A."/>
            <person name="Paape T.D."/>
            <person name="VandenBosch K.A."/>
        </authorList>
    </citation>
    <scope>GENE FAMILY</scope>
</reference>
<accession>Q2V3H5</accession>
<comment type="subcellular location">
    <subcellularLocation>
        <location evidence="1">Secreted</location>
    </subcellularLocation>
</comment>
<comment type="similarity">
    <text evidence="3">Belongs to the DEFL family.</text>
</comment>
<comment type="caution">
    <text evidence="3">Lacks 1 of the 4 disulfide bonds, which are conserved features of the family.</text>
</comment>
<feature type="signal peptide" evidence="2">
    <location>
        <begin position="1"/>
        <end position="22"/>
    </location>
</feature>
<feature type="chain" id="PRO_0000379764" description="Putative defensin-like protein 307">
    <location>
        <begin position="23"/>
        <end position="101"/>
    </location>
</feature>
<feature type="disulfide bond" evidence="1">
    <location>
        <begin position="29"/>
        <end position="49"/>
    </location>
</feature>
<feature type="disulfide bond" evidence="1">
    <location>
        <begin position="35"/>
        <end position="54"/>
    </location>
</feature>
<feature type="disulfide bond" evidence="1">
    <location>
        <begin position="40"/>
        <end position="56"/>
    </location>
</feature>
<gene>
    <name type="ordered locus">At4g17718</name>
    <name type="ORF">FCAALL</name>
</gene>
<sequence length="101" mass="11014">MEKSALIFIGILLFSTCTSIMARTGYVSCKTNSDCVKLKCPTPFGGPKCISGSCECPFKELMTLPNDTNYGVAACIDYCKAKGEIVYACILNHCYSYKPPM</sequence>
<protein>
    <recommendedName>
        <fullName>Putative defensin-like protein 307</fullName>
    </recommendedName>
</protein>
<name>DF307_ARATH</name>